<protein>
    <recommendedName>
        <fullName>LIM domain-containing protein ajuba</fullName>
    </recommendedName>
</protein>
<comment type="function">
    <text evidence="1">Adapter or scaffold protein which participates in the assembly of numerous protein complexes and is involved in several cellular processes such as cell fate determination, cytoskeletal organization, repression of gene transcription, mitosis, cell-cell adhesion, cell differentiation, proliferation and migration. Contributes to the linking and/or strengthening of epithelia cell-cell junctions in part by linking adhesive receptors to the actin cytoskeleton. May be involved in signal transduction from cell adhesion sites to the nucleus. Plays an important role in regulation of the kinase activity of AURKA for mitotic commitment. Also a component of the IL-1 signaling pathway modulating IL-1-induced NFKB1 activation by influencing the assembly and activity of the PRKCZ-SQSTM1-TRAF6 multiprotein signaling complex. Functions as an HDAC-dependent corepressor for a subset of GFI1 target genes. Acts as a transcriptional corepressor for SNAI1 and SNAI2/SLUG-dependent repression of E-cadherin transcription. Acts as a hypoxic regulator by bridging an association between the prolyl hydroxylases and VHL enabling efficient degradation of HIF1A. Positively regulates microRNA (miRNA)-mediated gene silencing. Negatively regulates the Hippo signaling pathway and antagonizes phosphorylation of YAP1 (By similarity).</text>
</comment>
<comment type="subunit">
    <text evidence="1">Interacts with GRB2 and PIP5K1B. Interacts with AURKA; the interaction occurs during mitosis and both proteins are phosphorylated as they form a complex. Interacts with CTNNA1 and with F-actin. Interacts with LATS2; the interaction occurs during mitosis and the complex regulates organization of the spindle apparatus through recruitment of TUBG to the centrosome. Forms a complex with SQSTM1, PRKCZ and TRAF6. Component of the GFI1-AJUBA-HDAC1 repressor complex. Interacts directly (via the LIM domains) with GFI1; the interaction results in the HDAC-dependent corepression of a subset of GFI1 target genes, and is independent of the GFI1 SNAG domain. Interacts with HDAC1, HDAC2 and HDAC3 (By similarity). Interacts with SLC1A2. Interacts with EIF4E, AGO1, AGO2, DCP2, DDX6, LATS1, LATS2, SAV1, EGLN2/PHD1 and EGLN3/PHD3. Interacts (via LIM domains) with VHL (By similarity). Interacts (via LIM domains) with SNAI1 (via SNAG domain), SNAI2/SLUG (via SNAG domain) and SCRT1 (via SNAG domain) (By similarity).</text>
</comment>
<comment type="subcellular location">
    <subcellularLocation>
        <location evidence="1">Cytoplasm</location>
        <location evidence="1">Cytoskeleton</location>
    </subcellularLocation>
    <subcellularLocation>
        <location evidence="1">Cell membrane</location>
    </subcellularLocation>
    <subcellularLocation>
        <location evidence="1">Cell junction</location>
    </subcellularLocation>
    <subcellularLocation>
        <location evidence="1">Nucleus</location>
    </subcellularLocation>
    <subcellularLocation>
        <location evidence="1">Cytoplasm</location>
        <location evidence="1">Cytoskeleton</location>
        <location evidence="1">Microtubule organizing center</location>
        <location evidence="1">Centrosome</location>
    </subcellularLocation>
    <subcellularLocation>
        <location evidence="1">Cytoplasm</location>
        <location evidence="1">P-body</location>
    </subcellularLocation>
    <text evidence="1">Shuttles between the cytoplasm and the nucleus. Localizes on centrosomes during G2-M phase. Colocalizes with GFI1 in the nucleus. Preferentially colocalizes with cadherin-adhesive complexes at sites of cell-cell contacts.</text>
</comment>
<comment type="domain">
    <text evidence="1">LIM region interacts with CTNNA1. The preLIM region binds directly actin filaments (By similarity).</text>
</comment>
<comment type="domain">
    <text evidence="1">LIM-2 and LIM-3 domains mediate the interaction with the N-terminal region of AURKA. The association between LATS2 and AJUBA required the second LIM domain of AJUBA (By similarity).</text>
</comment>
<comment type="PTM">
    <text evidence="1">Phosphorylated by LATS2 during mitosis. Phosphorylated by AURKA (By similarity).</text>
</comment>
<comment type="miscellaneous">
    <text>'Ajuba' means 'curiosity' in Urdu, an Indian dialect.</text>
</comment>
<organism>
    <name type="scientific">Bos taurus</name>
    <name type="common">Bovine</name>
    <dbReference type="NCBI Taxonomy" id="9913"/>
    <lineage>
        <taxon>Eukaryota</taxon>
        <taxon>Metazoa</taxon>
        <taxon>Chordata</taxon>
        <taxon>Craniata</taxon>
        <taxon>Vertebrata</taxon>
        <taxon>Euteleostomi</taxon>
        <taxon>Mammalia</taxon>
        <taxon>Eutheria</taxon>
        <taxon>Laurasiatheria</taxon>
        <taxon>Artiodactyla</taxon>
        <taxon>Ruminantia</taxon>
        <taxon>Pecora</taxon>
        <taxon>Bovidae</taxon>
        <taxon>Bovinae</taxon>
        <taxon>Bos</taxon>
    </lineage>
</organism>
<reference key="1">
    <citation type="journal article" date="2009" name="Genome Biol.">
        <title>A whole-genome assembly of the domestic cow, Bos taurus.</title>
        <authorList>
            <person name="Zimin A.V."/>
            <person name="Delcher A.L."/>
            <person name="Florea L."/>
            <person name="Kelley D.R."/>
            <person name="Schatz M.C."/>
            <person name="Puiu D."/>
            <person name="Hanrahan F."/>
            <person name="Pertea G."/>
            <person name="Van Tassell C.P."/>
            <person name="Sonstegard T.S."/>
            <person name="Marcais G."/>
            <person name="Roberts M."/>
            <person name="Subramanian P."/>
            <person name="Yorke J.A."/>
            <person name="Salzberg S.L."/>
        </authorList>
    </citation>
    <scope>NUCLEOTIDE SEQUENCE [LARGE SCALE GENOMIC DNA]</scope>
    <source>
        <strain>Hereford</strain>
    </source>
</reference>
<feature type="chain" id="PRO_0000416966" description="LIM domain-containing protein ajuba">
    <location>
        <begin position="1"/>
        <end position="548"/>
    </location>
</feature>
<feature type="domain" description="LIM zinc-binding 1" evidence="3">
    <location>
        <begin position="346"/>
        <end position="407"/>
    </location>
</feature>
<feature type="domain" description="LIM zinc-binding 2" evidence="3">
    <location>
        <begin position="411"/>
        <end position="470"/>
    </location>
</feature>
<feature type="domain" description="LIM zinc-binding 3" evidence="3">
    <location>
        <begin position="471"/>
        <end position="540"/>
    </location>
</feature>
<feature type="region of interest" description="Disordered" evidence="4">
    <location>
        <begin position="1"/>
        <end position="182"/>
    </location>
</feature>
<feature type="compositionally biased region" description="Basic and acidic residues" evidence="4">
    <location>
        <begin position="1"/>
        <end position="17"/>
    </location>
</feature>
<feature type="compositionally biased region" description="Gly residues" evidence="4">
    <location>
        <begin position="39"/>
        <end position="67"/>
    </location>
</feature>
<feature type="compositionally biased region" description="Low complexity" evidence="4">
    <location>
        <begin position="125"/>
        <end position="148"/>
    </location>
</feature>
<feature type="modified residue" description="Phosphoserine" evidence="2">
    <location>
        <position position="89"/>
    </location>
</feature>
<feature type="modified residue" description="Phosphoserine" evidence="2">
    <location>
        <position position="129"/>
    </location>
</feature>
<feature type="modified residue" description="Phosphoserine" evidence="2">
    <location>
        <position position="143"/>
    </location>
</feature>
<feature type="modified residue" description="Phosphoserine" evidence="2">
    <location>
        <position position="185"/>
    </location>
</feature>
<feature type="modified residue" description="Phosphoserine" evidence="2">
    <location>
        <position position="273"/>
    </location>
</feature>
<dbReference type="EMBL" id="DAAA02028044">
    <property type="status" value="NOT_ANNOTATED_CDS"/>
    <property type="molecule type" value="Genomic_DNA"/>
</dbReference>
<dbReference type="EMBL" id="DAAA02028045">
    <property type="status" value="NOT_ANNOTATED_CDS"/>
    <property type="molecule type" value="Genomic_DNA"/>
</dbReference>
<dbReference type="RefSeq" id="NP_001179446.1">
    <property type="nucleotide sequence ID" value="NM_001192517.1"/>
</dbReference>
<dbReference type="FunCoup" id="E1BKA3">
    <property type="interactions" value="259"/>
</dbReference>
<dbReference type="STRING" id="9913.ENSBTAP00000062574"/>
<dbReference type="PaxDb" id="9913-ENSBTAP00000016915"/>
<dbReference type="Ensembl" id="ENSBTAT00000016915.7">
    <property type="protein sequence ID" value="ENSBTAP00000016915.5"/>
    <property type="gene ID" value="ENSBTAG00000012724.7"/>
</dbReference>
<dbReference type="GeneID" id="519937"/>
<dbReference type="KEGG" id="bta:519937"/>
<dbReference type="CTD" id="84962"/>
<dbReference type="VEuPathDB" id="HostDB:ENSBTAG00000012724"/>
<dbReference type="VGNC" id="VGNC:25769">
    <property type="gene designation" value="AJUBA"/>
</dbReference>
<dbReference type="eggNOG" id="KOG1701">
    <property type="taxonomic scope" value="Eukaryota"/>
</dbReference>
<dbReference type="GeneTree" id="ENSGT00940000160978"/>
<dbReference type="HOGENOM" id="CLU_001357_11_2_1"/>
<dbReference type="InParanoid" id="E1BKA3"/>
<dbReference type="OMA" id="HQGTANY"/>
<dbReference type="OrthoDB" id="25414at2759"/>
<dbReference type="TreeFam" id="TF320310"/>
<dbReference type="Reactome" id="R-BTA-1234176">
    <property type="pathway name" value="Oxygen-dependent proline hydroxylation of Hypoxia-inducible Factor Alpha"/>
</dbReference>
<dbReference type="Reactome" id="R-BTA-2565942">
    <property type="pathway name" value="Regulation of PLK1 Activity at G2/M Transition"/>
</dbReference>
<dbReference type="Reactome" id="R-BTA-9841922">
    <property type="pathway name" value="MLL4 and MLL3 complexes regulate expression of PPARG target genes in adipogenesis and hepatic steatosis"/>
</dbReference>
<dbReference type="Proteomes" id="UP000009136">
    <property type="component" value="Chromosome 10"/>
</dbReference>
<dbReference type="Bgee" id="ENSBTAG00000012724">
    <property type="expression patterns" value="Expressed in surface of tongue and 105 other cell types or tissues"/>
</dbReference>
<dbReference type="GO" id="GO:0005912">
    <property type="term" value="C:adherens junction"/>
    <property type="evidence" value="ECO:0000318"/>
    <property type="project" value="GO_Central"/>
</dbReference>
<dbReference type="GO" id="GO:0005813">
    <property type="term" value="C:centrosome"/>
    <property type="evidence" value="ECO:0007669"/>
    <property type="project" value="UniProtKB-SubCell"/>
</dbReference>
<dbReference type="GO" id="GO:0005829">
    <property type="term" value="C:cytosol"/>
    <property type="evidence" value="ECO:0007669"/>
    <property type="project" value="Ensembl"/>
</dbReference>
<dbReference type="GO" id="GO:0005925">
    <property type="term" value="C:focal adhesion"/>
    <property type="evidence" value="ECO:0007669"/>
    <property type="project" value="Ensembl"/>
</dbReference>
<dbReference type="GO" id="GO:0005794">
    <property type="term" value="C:Golgi apparatus"/>
    <property type="evidence" value="ECO:0007669"/>
    <property type="project" value="Ensembl"/>
</dbReference>
<dbReference type="GO" id="GO:0030027">
    <property type="term" value="C:lamellipodium"/>
    <property type="evidence" value="ECO:0007669"/>
    <property type="project" value="Ensembl"/>
</dbReference>
<dbReference type="GO" id="GO:0005654">
    <property type="term" value="C:nucleoplasm"/>
    <property type="evidence" value="ECO:0007669"/>
    <property type="project" value="Ensembl"/>
</dbReference>
<dbReference type="GO" id="GO:0005634">
    <property type="term" value="C:nucleus"/>
    <property type="evidence" value="ECO:0000318"/>
    <property type="project" value="GO_Central"/>
</dbReference>
<dbReference type="GO" id="GO:0000932">
    <property type="term" value="C:P-body"/>
    <property type="evidence" value="ECO:0000318"/>
    <property type="project" value="GO_Central"/>
</dbReference>
<dbReference type="GO" id="GO:0005886">
    <property type="term" value="C:plasma membrane"/>
    <property type="evidence" value="ECO:0007669"/>
    <property type="project" value="UniProtKB-SubCell"/>
</dbReference>
<dbReference type="GO" id="GO:0005667">
    <property type="term" value="C:transcription regulator complex"/>
    <property type="evidence" value="ECO:0000318"/>
    <property type="project" value="GO_Central"/>
</dbReference>
<dbReference type="GO" id="GO:0051015">
    <property type="term" value="F:actin filament binding"/>
    <property type="evidence" value="ECO:0007669"/>
    <property type="project" value="Ensembl"/>
</dbReference>
<dbReference type="GO" id="GO:0045294">
    <property type="term" value="F:alpha-catenin binding"/>
    <property type="evidence" value="ECO:0007669"/>
    <property type="project" value="Ensembl"/>
</dbReference>
<dbReference type="GO" id="GO:0003682">
    <property type="term" value="F:chromatin binding"/>
    <property type="evidence" value="ECO:0007669"/>
    <property type="project" value="Ensembl"/>
</dbReference>
<dbReference type="GO" id="GO:0046872">
    <property type="term" value="F:metal ion binding"/>
    <property type="evidence" value="ECO:0007669"/>
    <property type="project" value="UniProtKB-KW"/>
</dbReference>
<dbReference type="GO" id="GO:0030295">
    <property type="term" value="F:protein kinase activator activity"/>
    <property type="evidence" value="ECO:0007669"/>
    <property type="project" value="Ensembl"/>
</dbReference>
<dbReference type="GO" id="GO:0003714">
    <property type="term" value="F:transcription corepressor activity"/>
    <property type="evidence" value="ECO:0000250"/>
    <property type="project" value="UniProtKB"/>
</dbReference>
<dbReference type="GO" id="GO:0016339">
    <property type="term" value="P:calcium-dependent cell-cell adhesion via plasma membrane cell adhesion molecules"/>
    <property type="evidence" value="ECO:0007669"/>
    <property type="project" value="Ensembl"/>
</dbReference>
<dbReference type="GO" id="GO:0007010">
    <property type="term" value="P:cytoskeleton organization"/>
    <property type="evidence" value="ECO:0000318"/>
    <property type="project" value="GO_Central"/>
</dbReference>
<dbReference type="GO" id="GO:0048041">
    <property type="term" value="P:focal adhesion assembly"/>
    <property type="evidence" value="ECO:0007669"/>
    <property type="project" value="Ensembl"/>
</dbReference>
<dbReference type="GO" id="GO:0046474">
    <property type="term" value="P:glycerophospholipid biosynthetic process"/>
    <property type="evidence" value="ECO:0007669"/>
    <property type="project" value="Ensembl"/>
</dbReference>
<dbReference type="GO" id="GO:0030032">
    <property type="term" value="P:lamellipodium assembly"/>
    <property type="evidence" value="ECO:0007669"/>
    <property type="project" value="Ensembl"/>
</dbReference>
<dbReference type="GO" id="GO:0035278">
    <property type="term" value="P:miRNA-mediated gene silencing by inhibition of translation"/>
    <property type="evidence" value="ECO:0000250"/>
    <property type="project" value="UniProtKB"/>
</dbReference>
<dbReference type="GO" id="GO:0035331">
    <property type="term" value="P:negative regulation of hippo signaling"/>
    <property type="evidence" value="ECO:0000250"/>
    <property type="project" value="UniProtKB"/>
</dbReference>
<dbReference type="GO" id="GO:0000122">
    <property type="term" value="P:negative regulation of transcription by RNA polymerase II"/>
    <property type="evidence" value="ECO:0007669"/>
    <property type="project" value="Ensembl"/>
</dbReference>
<dbReference type="GO" id="GO:0009891">
    <property type="term" value="P:positive regulation of biosynthetic process"/>
    <property type="evidence" value="ECO:0007669"/>
    <property type="project" value="Ensembl"/>
</dbReference>
<dbReference type="GO" id="GO:0043123">
    <property type="term" value="P:positive regulation of canonical NF-kappaB signal transduction"/>
    <property type="evidence" value="ECO:0007669"/>
    <property type="project" value="Ensembl"/>
</dbReference>
<dbReference type="GO" id="GO:0031334">
    <property type="term" value="P:positive regulation of protein-containing complex assembly"/>
    <property type="evidence" value="ECO:0007669"/>
    <property type="project" value="Ensembl"/>
</dbReference>
<dbReference type="GO" id="GO:0008104">
    <property type="term" value="P:protein localization"/>
    <property type="evidence" value="ECO:0007669"/>
    <property type="project" value="Ensembl"/>
</dbReference>
<dbReference type="GO" id="GO:0030334">
    <property type="term" value="P:regulation of cell migration"/>
    <property type="evidence" value="ECO:0007669"/>
    <property type="project" value="Ensembl"/>
</dbReference>
<dbReference type="GO" id="GO:1900037">
    <property type="term" value="P:regulation of cellular response to hypoxia"/>
    <property type="evidence" value="ECO:0007669"/>
    <property type="project" value="Ensembl"/>
</dbReference>
<dbReference type="GO" id="GO:0006355">
    <property type="term" value="P:regulation of DNA-templated transcription"/>
    <property type="evidence" value="ECO:0000318"/>
    <property type="project" value="GO_Central"/>
</dbReference>
<dbReference type="GO" id="GO:0001666">
    <property type="term" value="P:response to hypoxia"/>
    <property type="evidence" value="ECO:0000318"/>
    <property type="project" value="GO_Central"/>
</dbReference>
<dbReference type="GO" id="GO:0035313">
    <property type="term" value="P:wound healing, spreading of epidermal cells"/>
    <property type="evidence" value="ECO:0007669"/>
    <property type="project" value="Ensembl"/>
</dbReference>
<dbReference type="CDD" id="cd09352">
    <property type="entry name" value="LIM1_Ajuba_like"/>
    <property type="match status" value="1"/>
</dbReference>
<dbReference type="CDD" id="cd09355">
    <property type="entry name" value="LIM2_Ajuba_like"/>
    <property type="match status" value="1"/>
</dbReference>
<dbReference type="CDD" id="cd09438">
    <property type="entry name" value="LIM3_Ajuba_like"/>
    <property type="match status" value="1"/>
</dbReference>
<dbReference type="FunFam" id="2.10.110.10:FF:000028">
    <property type="entry name" value="LIM domain-containing protein 1"/>
    <property type="match status" value="1"/>
</dbReference>
<dbReference type="FunFam" id="2.10.110.10:FF:000037">
    <property type="entry name" value="LIM domain-containing protein 1"/>
    <property type="match status" value="1"/>
</dbReference>
<dbReference type="Gene3D" id="2.10.110.10">
    <property type="entry name" value="Cysteine Rich Protein"/>
    <property type="match status" value="3"/>
</dbReference>
<dbReference type="InterPro" id="IPR047172">
    <property type="entry name" value="Ajuba-like"/>
</dbReference>
<dbReference type="InterPro" id="IPR047245">
    <property type="entry name" value="Ajuba-like_LIM1"/>
</dbReference>
<dbReference type="InterPro" id="IPR047247">
    <property type="entry name" value="Ajuba-like_LIM2"/>
</dbReference>
<dbReference type="InterPro" id="IPR047248">
    <property type="entry name" value="Ajuba-like_LIM3"/>
</dbReference>
<dbReference type="InterPro" id="IPR001781">
    <property type="entry name" value="Znf_LIM"/>
</dbReference>
<dbReference type="PANTHER" id="PTHR24219:SF7">
    <property type="entry name" value="LIM DOMAIN-CONTAINING PROTEIN AJUBA"/>
    <property type="match status" value="1"/>
</dbReference>
<dbReference type="PANTHER" id="PTHR24219">
    <property type="entry name" value="LIM DOMAIN-CONTAINING PROTEIN JUB"/>
    <property type="match status" value="1"/>
</dbReference>
<dbReference type="Pfam" id="PF00412">
    <property type="entry name" value="LIM"/>
    <property type="match status" value="3"/>
</dbReference>
<dbReference type="SMART" id="SM00132">
    <property type="entry name" value="LIM"/>
    <property type="match status" value="3"/>
</dbReference>
<dbReference type="SUPFAM" id="SSF57716">
    <property type="entry name" value="Glucocorticoid receptor-like (DNA-binding domain)"/>
    <property type="match status" value="3"/>
</dbReference>
<dbReference type="PROSITE" id="PS00478">
    <property type="entry name" value="LIM_DOMAIN_1"/>
    <property type="match status" value="2"/>
</dbReference>
<dbReference type="PROSITE" id="PS50023">
    <property type="entry name" value="LIM_DOMAIN_2"/>
    <property type="match status" value="3"/>
</dbReference>
<proteinExistence type="inferred from homology"/>
<keyword id="KW-0965">Cell junction</keyword>
<keyword id="KW-1003">Cell membrane</keyword>
<keyword id="KW-0963">Cytoplasm</keyword>
<keyword id="KW-0206">Cytoskeleton</keyword>
<keyword id="KW-0440">LIM domain</keyword>
<keyword id="KW-0472">Membrane</keyword>
<keyword id="KW-0479">Metal-binding</keyword>
<keyword id="KW-0539">Nucleus</keyword>
<keyword id="KW-0597">Phosphoprotein</keyword>
<keyword id="KW-1185">Reference proteome</keyword>
<keyword id="KW-0677">Repeat</keyword>
<keyword id="KW-0678">Repressor</keyword>
<keyword id="KW-0943">RNA-mediated gene silencing</keyword>
<keyword id="KW-0804">Transcription</keyword>
<keyword id="KW-0805">Transcription regulation</keyword>
<keyword id="KW-0862">Zinc</keyword>
<name>AJUBA_BOVIN</name>
<gene>
    <name type="primary">AJUBA</name>
    <name type="synonym">JUB</name>
</gene>
<accession>E1BKA3</accession>
<sequence>MERLGEKASRLLEKLRLSDSGSAKFGRRKGESSRSGSDGTPGPGKGRLSGLGGPRKSGPRGAAGGPGDEPLEPAREQGPLDAERNPRGSFEVPRYEGSFPGGPPPSRALPLPQSLPPDFRLETTAPALSPRSSFASSSASDASKPSSPRGSLLLDGAGAGGAGGSRPCSNRTSGISMGYDQRHGSPLPAGPCLFGPPLAGVPAGYSSGGVPSAYPELHAALDRLCAHRPAGFGCQESRHSYPPALGSPGALAGAGVGATGPLERRGAQPGRHSVTGYGDCAAGARYQDELTALLRLTVGTGGREAGVRGESAGIEASGLEEPPGAFVPEAARARIREPESREDYFGTCIKCNKGIYGQSNACQALDSLYHTQCFVCCSCGRTLRCKAFYSVNGSVYCEEDYLFSGFQEAAEKCCVCGHLILEKILQAMGKSYHPGCFRCIVCNKCLDGIPFTVDFSNQVYCVTDYHKSYAPKCAACGQPILPSEGCEDIVRVISMDRDYHFECYHCEDCRMQLSDEEGCCCFPLDGHLLCHGCHMQRLSARQPPANYI</sequence>
<evidence type="ECO:0000250" key="1"/>
<evidence type="ECO:0000250" key="2">
    <source>
        <dbReference type="UniProtKB" id="Q96IF1"/>
    </source>
</evidence>
<evidence type="ECO:0000255" key="3">
    <source>
        <dbReference type="PROSITE-ProRule" id="PRU00125"/>
    </source>
</evidence>
<evidence type="ECO:0000256" key="4">
    <source>
        <dbReference type="SAM" id="MobiDB-lite"/>
    </source>
</evidence>